<organism>
    <name type="scientific">Salmonella agona (strain SL483)</name>
    <dbReference type="NCBI Taxonomy" id="454166"/>
    <lineage>
        <taxon>Bacteria</taxon>
        <taxon>Pseudomonadati</taxon>
        <taxon>Pseudomonadota</taxon>
        <taxon>Gammaproteobacteria</taxon>
        <taxon>Enterobacterales</taxon>
        <taxon>Enterobacteriaceae</taxon>
        <taxon>Salmonella</taxon>
    </lineage>
</organism>
<reference key="1">
    <citation type="journal article" date="2011" name="J. Bacteriol.">
        <title>Comparative genomics of 28 Salmonella enterica isolates: evidence for CRISPR-mediated adaptive sublineage evolution.</title>
        <authorList>
            <person name="Fricke W.F."/>
            <person name="Mammel M.K."/>
            <person name="McDermott P.F."/>
            <person name="Tartera C."/>
            <person name="White D.G."/>
            <person name="Leclerc J.E."/>
            <person name="Ravel J."/>
            <person name="Cebula T.A."/>
        </authorList>
    </citation>
    <scope>NUCLEOTIDE SEQUENCE [LARGE SCALE GENOMIC DNA]</scope>
    <source>
        <strain>SL483</strain>
    </source>
</reference>
<name>PYRE_SALA4</name>
<evidence type="ECO:0000255" key="1">
    <source>
        <dbReference type="HAMAP-Rule" id="MF_01208"/>
    </source>
</evidence>
<protein>
    <recommendedName>
        <fullName evidence="1">Orotate phosphoribosyltransferase</fullName>
        <shortName evidence="1">OPRT</shortName>
        <shortName evidence="1">OPRTase</shortName>
        <ecNumber evidence="1">2.4.2.10</ecNumber>
    </recommendedName>
</protein>
<gene>
    <name evidence="1" type="primary">pyrE</name>
    <name type="ordered locus">SeAg_B3950</name>
</gene>
<proteinExistence type="inferred from homology"/>
<sequence length="213" mass="23578">MKPYQRQFIEFALNKQVLKFGEFTLKSGRKSPYFFNAGLFNTGRDLALLGRFYAEALVDSGIEFDLLFGPAYKGIPIATTTAVALAEHHDKDLPYCFNRKEAKDHGEGGCLVGSALQGRVMLVDDVITAGTAIRESMEIIQAHGATLAGVLISLDRQERGRGEISAIQEVERDYGCKVISIITLKDLIAYLEEKPDMAEHLAAVRAYREEFGV</sequence>
<keyword id="KW-0328">Glycosyltransferase</keyword>
<keyword id="KW-0460">Magnesium</keyword>
<keyword id="KW-0665">Pyrimidine biosynthesis</keyword>
<keyword id="KW-0808">Transferase</keyword>
<accession>B5EXE6</accession>
<dbReference type="EC" id="2.4.2.10" evidence="1"/>
<dbReference type="EMBL" id="CP001138">
    <property type="protein sequence ID" value="ACH52691.1"/>
    <property type="molecule type" value="Genomic_DNA"/>
</dbReference>
<dbReference type="RefSeq" id="WP_000806165.1">
    <property type="nucleotide sequence ID" value="NC_011149.1"/>
</dbReference>
<dbReference type="SMR" id="B5EXE6"/>
<dbReference type="KEGG" id="sea:SeAg_B3950"/>
<dbReference type="HOGENOM" id="CLU_074878_0_1_6"/>
<dbReference type="UniPathway" id="UPA00070">
    <property type="reaction ID" value="UER00119"/>
</dbReference>
<dbReference type="Proteomes" id="UP000008819">
    <property type="component" value="Chromosome"/>
</dbReference>
<dbReference type="GO" id="GO:0005737">
    <property type="term" value="C:cytoplasm"/>
    <property type="evidence" value="ECO:0007669"/>
    <property type="project" value="TreeGrafter"/>
</dbReference>
<dbReference type="GO" id="GO:0000287">
    <property type="term" value="F:magnesium ion binding"/>
    <property type="evidence" value="ECO:0007669"/>
    <property type="project" value="UniProtKB-UniRule"/>
</dbReference>
<dbReference type="GO" id="GO:0004588">
    <property type="term" value="F:orotate phosphoribosyltransferase activity"/>
    <property type="evidence" value="ECO:0007669"/>
    <property type="project" value="UniProtKB-UniRule"/>
</dbReference>
<dbReference type="GO" id="GO:0006207">
    <property type="term" value="P:'de novo' pyrimidine nucleobase biosynthetic process"/>
    <property type="evidence" value="ECO:0007669"/>
    <property type="project" value="TreeGrafter"/>
</dbReference>
<dbReference type="GO" id="GO:0044205">
    <property type="term" value="P:'de novo' UMP biosynthetic process"/>
    <property type="evidence" value="ECO:0007669"/>
    <property type="project" value="UniProtKB-UniRule"/>
</dbReference>
<dbReference type="GO" id="GO:0046132">
    <property type="term" value="P:pyrimidine ribonucleoside biosynthetic process"/>
    <property type="evidence" value="ECO:0007669"/>
    <property type="project" value="TreeGrafter"/>
</dbReference>
<dbReference type="CDD" id="cd06223">
    <property type="entry name" value="PRTases_typeI"/>
    <property type="match status" value="1"/>
</dbReference>
<dbReference type="FunFam" id="3.40.50.2020:FF:000008">
    <property type="entry name" value="Orotate phosphoribosyltransferase"/>
    <property type="match status" value="1"/>
</dbReference>
<dbReference type="Gene3D" id="3.40.50.2020">
    <property type="match status" value="1"/>
</dbReference>
<dbReference type="HAMAP" id="MF_01208">
    <property type="entry name" value="PyrE"/>
    <property type="match status" value="1"/>
</dbReference>
<dbReference type="InterPro" id="IPR023031">
    <property type="entry name" value="OPRT"/>
</dbReference>
<dbReference type="InterPro" id="IPR004467">
    <property type="entry name" value="Or_phspho_trans_dom"/>
</dbReference>
<dbReference type="InterPro" id="IPR000836">
    <property type="entry name" value="PRibTrfase_dom"/>
</dbReference>
<dbReference type="InterPro" id="IPR029057">
    <property type="entry name" value="PRTase-like"/>
</dbReference>
<dbReference type="NCBIfam" id="TIGR00336">
    <property type="entry name" value="pyrE"/>
    <property type="match status" value="1"/>
</dbReference>
<dbReference type="PANTHER" id="PTHR46683">
    <property type="entry name" value="OROTATE PHOSPHORIBOSYLTRANSFERASE 1-RELATED"/>
    <property type="match status" value="1"/>
</dbReference>
<dbReference type="PANTHER" id="PTHR46683:SF1">
    <property type="entry name" value="OROTATE PHOSPHORIBOSYLTRANSFERASE 1-RELATED"/>
    <property type="match status" value="1"/>
</dbReference>
<dbReference type="Pfam" id="PF00156">
    <property type="entry name" value="Pribosyltran"/>
    <property type="match status" value="1"/>
</dbReference>
<dbReference type="SUPFAM" id="SSF53271">
    <property type="entry name" value="PRTase-like"/>
    <property type="match status" value="1"/>
</dbReference>
<dbReference type="PROSITE" id="PS00103">
    <property type="entry name" value="PUR_PYR_PR_TRANSFER"/>
    <property type="match status" value="1"/>
</dbReference>
<comment type="function">
    <text evidence="1">Catalyzes the transfer of a ribosyl phosphate group from 5-phosphoribose 1-diphosphate to orotate, leading to the formation of orotidine monophosphate (OMP).</text>
</comment>
<comment type="catalytic activity">
    <reaction evidence="1">
        <text>orotidine 5'-phosphate + diphosphate = orotate + 5-phospho-alpha-D-ribose 1-diphosphate</text>
        <dbReference type="Rhea" id="RHEA:10380"/>
        <dbReference type="ChEBI" id="CHEBI:30839"/>
        <dbReference type="ChEBI" id="CHEBI:33019"/>
        <dbReference type="ChEBI" id="CHEBI:57538"/>
        <dbReference type="ChEBI" id="CHEBI:58017"/>
        <dbReference type="EC" id="2.4.2.10"/>
    </reaction>
</comment>
<comment type="cofactor">
    <cofactor evidence="1">
        <name>Mg(2+)</name>
        <dbReference type="ChEBI" id="CHEBI:18420"/>
    </cofactor>
</comment>
<comment type="pathway">
    <text evidence="1">Pyrimidine metabolism; UMP biosynthesis via de novo pathway; UMP from orotate: step 1/2.</text>
</comment>
<comment type="subunit">
    <text evidence="1">Homodimer.</text>
</comment>
<comment type="similarity">
    <text evidence="1">Belongs to the purine/pyrimidine phosphoribosyltransferase family. PyrE subfamily.</text>
</comment>
<feature type="chain" id="PRO_1000138824" description="Orotate phosphoribosyltransferase">
    <location>
        <begin position="1"/>
        <end position="213"/>
    </location>
</feature>
<feature type="binding site" description="in other chain" evidence="1">
    <location>
        <position position="26"/>
    </location>
    <ligand>
        <name>5-phospho-alpha-D-ribose 1-diphosphate</name>
        <dbReference type="ChEBI" id="CHEBI:58017"/>
        <note>ligand shared between dimeric partners</note>
    </ligand>
</feature>
<feature type="binding site" evidence="1">
    <location>
        <begin position="34"/>
        <end position="35"/>
    </location>
    <ligand>
        <name>orotate</name>
        <dbReference type="ChEBI" id="CHEBI:30839"/>
    </ligand>
</feature>
<feature type="binding site" description="in other chain" evidence="1">
    <location>
        <begin position="72"/>
        <end position="73"/>
    </location>
    <ligand>
        <name>5-phospho-alpha-D-ribose 1-diphosphate</name>
        <dbReference type="ChEBI" id="CHEBI:58017"/>
        <note>ligand shared between dimeric partners</note>
    </ligand>
</feature>
<feature type="binding site" evidence="1">
    <location>
        <position position="99"/>
    </location>
    <ligand>
        <name>5-phospho-alpha-D-ribose 1-diphosphate</name>
        <dbReference type="ChEBI" id="CHEBI:58017"/>
        <note>ligand shared between dimeric partners</note>
    </ligand>
</feature>
<feature type="binding site" description="in other chain" evidence="1">
    <location>
        <position position="100"/>
    </location>
    <ligand>
        <name>5-phospho-alpha-D-ribose 1-diphosphate</name>
        <dbReference type="ChEBI" id="CHEBI:58017"/>
        <note>ligand shared between dimeric partners</note>
    </ligand>
</feature>
<feature type="binding site" evidence="1">
    <location>
        <position position="103"/>
    </location>
    <ligand>
        <name>5-phospho-alpha-D-ribose 1-diphosphate</name>
        <dbReference type="ChEBI" id="CHEBI:58017"/>
        <note>ligand shared between dimeric partners</note>
    </ligand>
</feature>
<feature type="binding site" evidence="1">
    <location>
        <position position="105"/>
    </location>
    <ligand>
        <name>5-phospho-alpha-D-ribose 1-diphosphate</name>
        <dbReference type="ChEBI" id="CHEBI:58017"/>
        <note>ligand shared between dimeric partners</note>
    </ligand>
</feature>
<feature type="binding site" description="in other chain" evidence="1">
    <location>
        <begin position="124"/>
        <end position="132"/>
    </location>
    <ligand>
        <name>5-phospho-alpha-D-ribose 1-diphosphate</name>
        <dbReference type="ChEBI" id="CHEBI:58017"/>
        <note>ligand shared between dimeric partners</note>
    </ligand>
</feature>
<feature type="binding site" evidence="1">
    <location>
        <position position="128"/>
    </location>
    <ligand>
        <name>orotate</name>
        <dbReference type="ChEBI" id="CHEBI:30839"/>
    </ligand>
</feature>
<feature type="binding site" evidence="1">
    <location>
        <position position="156"/>
    </location>
    <ligand>
        <name>orotate</name>
        <dbReference type="ChEBI" id="CHEBI:30839"/>
    </ligand>
</feature>